<keyword id="KW-0903">Direct protein sequencing</keyword>
<keyword id="KW-1015">Disulfide bond</keyword>
<keyword id="KW-0872">Ion channel impairing toxin</keyword>
<keyword id="KW-0528">Neurotoxin</keyword>
<keyword id="KW-0632">Potassium channel impairing toxin</keyword>
<keyword id="KW-0964">Secreted</keyword>
<keyword id="KW-0800">Toxin</keyword>
<keyword id="KW-1220">Voltage-gated potassium channel impairing toxin</keyword>
<evidence type="ECO:0000250" key="1"/>
<evidence type="ECO:0000269" key="2">
    <source>
    </source>
</evidence>
<evidence type="ECO:0000269" key="3">
    <source>
    </source>
</evidence>
<evidence type="ECO:0000303" key="4">
    <source>
    </source>
</evidence>
<evidence type="ECO:0000305" key="5"/>
<evidence type="ECO:0000305" key="6">
    <source>
    </source>
</evidence>
<name>KAX3B_ODODO</name>
<reference key="1">
    <citation type="journal article" date="2008" name="Toxicon">
        <title>OdK2, a Kv1.3 channel-selective toxin from the venom of the Iranian scorpion Odonthobuthus doriae.</title>
        <authorList>
            <person name="Abdel-Mottaleb Y."/>
            <person name="Vandendriessche T."/>
            <person name="Clynen E."/>
            <person name="Landuyt B."/>
            <person name="Jalali A."/>
            <person name="Vatanpour H."/>
            <person name="Schoofs L."/>
            <person name="Tytgat J."/>
        </authorList>
    </citation>
    <scope>PROTEIN SEQUENCE</scope>
    <scope>FUNCTION</scope>
    <scope>MASS SPECTROMETRY</scope>
    <scope>SUBCELLULAR LOCATION</scope>
    <source>
        <tissue>Venom</tissue>
    </source>
</reference>
<reference key="2">
    <citation type="journal article" date="2018" name="Nat. Struct. Mol. Biol.">
        <title>Screening, large-scale production and structure-based classification of cystine-dense peptides.</title>
        <authorList>
            <person name="Correnti C.E."/>
            <person name="Gewe M.M."/>
            <person name="Mehlin C."/>
            <person name="Bandaranayake A.D."/>
            <person name="Johnsen W.A."/>
            <person name="Rupert P.B."/>
            <person name="Brusniak M.Y."/>
            <person name="Clarke M."/>
            <person name="Burke S.E."/>
            <person name="De Van Der Schueren W."/>
            <person name="Pilat K."/>
            <person name="Turnbaugh S.M."/>
            <person name="May D."/>
            <person name="Watson A."/>
            <person name="Chan M.K."/>
            <person name="Bahl C.D."/>
            <person name="Olson J.M."/>
            <person name="Strong R.K."/>
        </authorList>
    </citation>
    <scope>FUNCTION</scope>
    <scope>SYNTHESIS</scope>
</reference>
<proteinExistence type="evidence at protein level"/>
<comment type="function">
    <text evidence="2 3">Blocks the voltage-gated potassium channel Kv1.3/KCNA3 (IC(50)=7.2 nM) (PubMed:18471844, PubMed:29483648). Correnti and colleagues have also shown that this toxin inhibits Kv1.1/KCNA1, which is different from Abdel-Mottaleb and colleagues conclusions (PubMed:29483648).</text>
</comment>
<comment type="subcellular location">
    <subcellularLocation>
        <location evidence="2">Secreted</location>
    </subcellularLocation>
</comment>
<comment type="tissue specificity">
    <text evidence="6">Expressed by the venom gland.</text>
</comment>
<comment type="domain">
    <text evidence="5">Has the structural arrangement of an alpha-helix connected to antiparallel beta-sheets by disulfide bonds (CS-alpha/beta).</text>
</comment>
<comment type="mass spectrometry"/>
<comment type="miscellaneous">
    <text evidence="2">Negative results: has no activity on Kv1.1/KCNA1, Kv1.2/KCNA2, Kv1.4/KCNA4, Kv1.5/ KCNA5, Kv1.6/KCNA6, Shaker/Sh and human Kv11.1/KCNH2.</text>
</comment>
<comment type="similarity">
    <text evidence="5">Belongs to the short scorpion toxin superfamily. Potassium channel inhibitor family. Alpha-KTx 03 subfamily.</text>
</comment>
<organism>
    <name type="scientific">Odontobuthus doriae</name>
    <name type="common">Yellow Iranian scorpion</name>
    <dbReference type="NCBI Taxonomy" id="342590"/>
    <lineage>
        <taxon>Eukaryota</taxon>
        <taxon>Metazoa</taxon>
        <taxon>Ecdysozoa</taxon>
        <taxon>Arthropoda</taxon>
        <taxon>Chelicerata</taxon>
        <taxon>Arachnida</taxon>
        <taxon>Scorpiones</taxon>
        <taxon>Buthida</taxon>
        <taxon>Buthoidea</taxon>
        <taxon>Buthidae</taxon>
        <taxon>Odontobuthus</taxon>
    </lineage>
</organism>
<dbReference type="SMR" id="P0C909"/>
<dbReference type="GO" id="GO:0005576">
    <property type="term" value="C:extracellular region"/>
    <property type="evidence" value="ECO:0007669"/>
    <property type="project" value="UniProtKB-SubCell"/>
</dbReference>
<dbReference type="GO" id="GO:0008200">
    <property type="term" value="F:ion channel inhibitor activity"/>
    <property type="evidence" value="ECO:0007669"/>
    <property type="project" value="InterPro"/>
</dbReference>
<dbReference type="GO" id="GO:0015459">
    <property type="term" value="F:potassium channel regulator activity"/>
    <property type="evidence" value="ECO:0007669"/>
    <property type="project" value="UniProtKB-KW"/>
</dbReference>
<dbReference type="GO" id="GO:0090729">
    <property type="term" value="F:toxin activity"/>
    <property type="evidence" value="ECO:0007669"/>
    <property type="project" value="UniProtKB-KW"/>
</dbReference>
<dbReference type="FunFam" id="3.30.30.10:FF:000009">
    <property type="entry name" value="Potassium channel toxin alpha-KTx 4.3"/>
    <property type="match status" value="1"/>
</dbReference>
<dbReference type="Gene3D" id="3.30.30.10">
    <property type="entry name" value="Knottin, scorpion toxin-like"/>
    <property type="match status" value="1"/>
</dbReference>
<dbReference type="InterPro" id="IPR036574">
    <property type="entry name" value="Scorpion_toxin-like_sf"/>
</dbReference>
<dbReference type="InterPro" id="IPR001947">
    <property type="entry name" value="Scorpion_toxinS_K_inh"/>
</dbReference>
<dbReference type="Pfam" id="PF00451">
    <property type="entry name" value="Toxin_2"/>
    <property type="match status" value="1"/>
</dbReference>
<dbReference type="PRINTS" id="PR00286">
    <property type="entry name" value="CHARYBDTOXIN"/>
</dbReference>
<dbReference type="SUPFAM" id="SSF57095">
    <property type="entry name" value="Scorpion toxin-like"/>
    <property type="match status" value="1"/>
</dbReference>
<dbReference type="PROSITE" id="PS01138">
    <property type="entry name" value="SCORP_SHORT_TOXIN"/>
    <property type="match status" value="1"/>
</dbReference>
<sequence>GVPTDVKCRGSPQCIQPCKDAGMRFGKCMNGKCHCTPK</sequence>
<protein>
    <recommendedName>
        <fullName>Potassium channel toxin alpha-KTx 3.11</fullName>
    </recommendedName>
    <alternativeName>
        <fullName evidence="4">OdK2</fullName>
    </alternativeName>
</protein>
<feature type="peptide" id="PRO_0000368017" description="Potassium channel toxin alpha-KTx 3.11" evidence="2">
    <location>
        <begin position="1"/>
        <end position="38"/>
    </location>
</feature>
<feature type="disulfide bond" evidence="1">
    <location>
        <begin position="8"/>
        <end position="28"/>
    </location>
</feature>
<feature type="disulfide bond" evidence="1">
    <location>
        <begin position="14"/>
        <end position="33"/>
    </location>
</feature>
<feature type="disulfide bond" evidence="1">
    <location>
        <begin position="18"/>
        <end position="35"/>
    </location>
</feature>
<accession>P0C909</accession>